<gene>
    <name evidence="4" type="primary">mpaH</name>
</gene>
<sequence length="433" mass="49121">MSTEKFTITEHLVPGSHIREYPGSTVNQQDVLKIHVKNYTPKREGPVPDDAITFIATHGVGLPKELYEPLWDELLDQASGFHIRAIWMADVASMNQSGIHNEDKLSMDCSWMDHARDLLLMINHFRDQMPRPLVGIGHSFGGNIITNLAYLHPRLFTTLLLLDPLIQLSPPSLGFGTDAPSAINYTLWRDDVWPSREEAIRANRAIMQGMDPRCLDRMTKHFFRDLPTPLYPDVEAIKARFGTTADSTTTPVTLTTPKYHELVAQIRQNFNARDPKTGRIEVPRDTHADMDPLVAYIPLYRPEPRSTFRRLETLRPSCLWVIAGATFLNIDEIREGVKICGSGIGGSGGVPDGRVREVVLPGFGHLMPFQEVKTVAGTCVVWLQQEMDRFRQTERQWKEDRDGKSHQAVEENWYKVLKPIPTGRKKRSDKGKL</sequence>
<accession>F1DBB4</accession>
<keyword id="KW-0378">Hydrolase</keyword>
<keyword id="KW-0576">Peroxisome</keyword>
<name>MPAH_PENBR</name>
<feature type="chain" id="PRO_0000436576" description="Type I acyl-CoA thioesterase mpaH">
    <location>
        <begin position="1"/>
        <end position="433"/>
    </location>
</feature>
<feature type="region of interest" description="Abhydrolase domain" evidence="2">
    <location>
        <begin position="58"/>
        <end position="246"/>
    </location>
</feature>
<feature type="active site" description="Nucleophile" evidence="1">
    <location>
        <position position="139"/>
    </location>
</feature>
<feature type="active site" evidence="1">
    <location>
        <position position="163"/>
    </location>
</feature>
<feature type="active site" evidence="1">
    <location>
        <position position="365"/>
    </location>
</feature>
<feature type="binding site" evidence="1">
    <location>
        <position position="60"/>
    </location>
    <ligand>
        <name>substrate</name>
    </ligand>
</feature>
<feature type="binding site" evidence="1">
    <location>
        <position position="140"/>
    </location>
    <ligand>
        <name>substrate</name>
    </ligand>
</feature>
<dbReference type="EC" id="3.1.1.-" evidence="6"/>
<dbReference type="EMBL" id="HQ731031">
    <property type="protein sequence ID" value="ADY00135.1"/>
    <property type="molecule type" value="Genomic_DNA"/>
</dbReference>
<dbReference type="SMR" id="F1DBB4"/>
<dbReference type="ESTHER" id="penbr-mpaH">
    <property type="family name" value="MpaH"/>
</dbReference>
<dbReference type="UniPathway" id="UPA00213"/>
<dbReference type="GO" id="GO:0005782">
    <property type="term" value="C:peroxisomal matrix"/>
    <property type="evidence" value="ECO:0000250"/>
    <property type="project" value="GO_Central"/>
</dbReference>
<dbReference type="GO" id="GO:0016787">
    <property type="term" value="F:hydrolase activity"/>
    <property type="evidence" value="ECO:0000250"/>
    <property type="project" value="GO_Central"/>
</dbReference>
<dbReference type="GO" id="GO:0140722">
    <property type="term" value="P:mycophenolic acid biosynthetic process"/>
    <property type="evidence" value="ECO:0000250"/>
    <property type="project" value="GO_Central"/>
</dbReference>
<dbReference type="GO" id="GO:0016114">
    <property type="term" value="P:terpenoid biosynthetic process"/>
    <property type="evidence" value="ECO:0007669"/>
    <property type="project" value="UniProtKB-UniPathway"/>
</dbReference>
<dbReference type="Gene3D" id="3.40.50.1820">
    <property type="entry name" value="alpha/beta hydrolase"/>
    <property type="match status" value="1"/>
</dbReference>
<dbReference type="InterPro" id="IPR000073">
    <property type="entry name" value="AB_hydrolase_1"/>
</dbReference>
<dbReference type="InterPro" id="IPR029058">
    <property type="entry name" value="AB_hydrolase_fold"/>
</dbReference>
<dbReference type="Pfam" id="PF12697">
    <property type="entry name" value="Abhydrolase_6"/>
    <property type="match status" value="1"/>
</dbReference>
<dbReference type="SUPFAM" id="SSF53474">
    <property type="entry name" value="alpha/beta-Hydrolases"/>
    <property type="match status" value="1"/>
</dbReference>
<protein>
    <recommendedName>
        <fullName evidence="4">Type I acyl-CoA thioesterase mpaH</fullName>
        <ecNumber evidence="6">3.1.1.-</ecNumber>
    </recommendedName>
    <alternativeName>
        <fullName evidence="4">Mycophenolic acid biosynthesis cluster protein H</fullName>
    </alternativeName>
</protein>
<proteinExistence type="evidence at protein level"/>
<organism>
    <name type="scientific">Penicillium brevicompactum</name>
    <dbReference type="NCBI Taxonomy" id="5074"/>
    <lineage>
        <taxon>Eukaryota</taxon>
        <taxon>Fungi</taxon>
        <taxon>Dikarya</taxon>
        <taxon>Ascomycota</taxon>
        <taxon>Pezizomycotina</taxon>
        <taxon>Eurotiomycetes</taxon>
        <taxon>Eurotiomycetidae</taxon>
        <taxon>Eurotiales</taxon>
        <taxon>Aspergillaceae</taxon>
        <taxon>Penicillium</taxon>
    </lineage>
</organism>
<comment type="function">
    <text evidence="3 6 7">Type I acyl-CoA thioesterase; part of the gene cluster that mediates the biosynthesis of mycophenolic acid (MPA), the first isolated antibiotic natural product in the world obtained from a culture of Penicillium brevicompactum in 1893 (PubMed:21398490). MpaH acts as a peroxisomal acyl-CoA hydrolase that converts MPA-CoA into the final product MPA (PubMed:21398490). The first step of the pathway is the synthesis of 5-methylorsellinic acid (5MOA) by the cytosolic polyketide synthase mpaC. 5MOA is then converted to the phthalide compound 5,7-dihydroxy-4,6-dimethylphthalide (DHMP) by the endoplasmic reticulum-bound cytochrome P450 monooxygenase mpaDE. MpaDE first catalyzes hydroxylation of 5-MOA to 4,6-dihydroxy-2-(hydroxymethyl)-3-methylbenzoic acid (DHMB). MpaDE then acts as a lactone synthase that catalyzes the ring closure to convert DHMB into DHMP. The next step is the prenylation of DHMP by the Golgi apparatus-associated prenyltransferase mpaA to yield farnesyl-DHMP (FDHMP). The ER-bound oxygenase mpaB then mediates the oxidative cleavage the C19-C20 double bond in FDHMP to yield FDHMP-3C via a mycophenolic aldehyde intermediate. The O-methyltransferase mpaG catalyzes the methylation of FDHMP-3C to yield MFDHMP-3C. After the cytosolic methylation of FDHMP-3C, MFDHMP-3C enters into peroxisomes probably via free diffusion due to its low molecular weight. Upon a peroxisomal CoA ligation reaction, catalyzed by a beta-oxidation component enzyme acyl-CoA ligase ACL891, MFDHMP-3C-CoA would then be restricted to peroxisomes for the following beta-oxidation pathway steps. The peroxisomal beta-oxidation machinery than converts MFDHMP-3C-CoA into MPA_CoA, via a beta-oxidation chain-shortening process. Finally mpaH acts as a peroxisomal acyl-CoA hydrolase with high substrate specificity toward MPA-CoA to release the final product MPA (Probable) (PubMed:21398490, PubMed:22544261).</text>
</comment>
<comment type="catalytic activity">
    <reaction evidence="6">
        <text>mycophenolyl-CoA + H2O = mycophenolate + CoA + H(+)</text>
        <dbReference type="Rhea" id="RHEA:66704"/>
        <dbReference type="ChEBI" id="CHEBI:15377"/>
        <dbReference type="ChEBI" id="CHEBI:15378"/>
        <dbReference type="ChEBI" id="CHEBI:57287"/>
        <dbReference type="ChEBI" id="CHEBI:62932"/>
        <dbReference type="ChEBI" id="CHEBI:167447"/>
    </reaction>
    <physiologicalReaction direction="left-to-right" evidence="6">
        <dbReference type="Rhea" id="RHEA:66705"/>
    </physiologicalReaction>
</comment>
<comment type="pathway">
    <text evidence="3">Secondary metabolite biosynthesis; terpenoid biosynthesis.</text>
</comment>
<comment type="subunit">
    <text evidence="1">Homodimer.</text>
</comment>
<comment type="subcellular location">
    <subcellularLocation>
        <location evidence="1">Peroxisome matrix</location>
    </subcellularLocation>
    <text evidence="1">The mpaH' location in peroxisomes is required for the unique cooperation between biosynthetic and beta-oxidation catabolism machineries to produce final MPA.</text>
</comment>
<comment type="similarity">
    <text evidence="5">Belongs to the AB hydrolase superfamily. MpaH hydrolase family.</text>
</comment>
<evidence type="ECO:0000250" key="1">
    <source>
        <dbReference type="UniProtKB" id="A0A0B5LB55"/>
    </source>
</evidence>
<evidence type="ECO:0000255" key="2"/>
<evidence type="ECO:0000269" key="3">
    <source>
    </source>
</evidence>
<evidence type="ECO:0000303" key="4">
    <source>
    </source>
</evidence>
<evidence type="ECO:0000305" key="5"/>
<evidence type="ECO:0000305" key="6">
    <source>
    </source>
</evidence>
<evidence type="ECO:0000305" key="7">
    <source>
    </source>
</evidence>
<reference key="1">
    <citation type="journal article" date="2011" name="Appl. Environ. Microbiol.">
        <title>Molecular basis for mycophenolic acid biosynthesis in Penicillium brevicompactum.</title>
        <authorList>
            <person name="Regueira T.B."/>
            <person name="Kildegaard K.R."/>
            <person name="Hansen B.G."/>
            <person name="Mortensen U.H."/>
            <person name="Hertweck C."/>
            <person name="Nielsen J."/>
        </authorList>
    </citation>
    <scope>NUCLEOTIDE SEQUENCE [GENOMIC DNA]</scope>
    <scope>CATALYTIC ACTIVITY</scope>
    <scope>FUNCTION</scope>
    <scope>PATHWAY</scope>
    <source>
        <strain>IBT 23078</strain>
    </source>
</reference>
<reference key="2">
    <citation type="journal article" date="2012" name="Appl. Environ. Microbiol.">
        <title>Involvement of a natural fusion of a cytochrome p450 and a hydrolase in mycophenolic acid biosynthesis.</title>
        <authorList>
            <person name="Hansen B.G."/>
            <person name="Mnich E."/>
            <person name="Nielsen K.F."/>
            <person name="Nielsen J.B."/>
            <person name="Nielsen M.T."/>
            <person name="Mortensen U.H."/>
            <person name="Larsen T.O."/>
            <person name="Patil K.R."/>
        </authorList>
    </citation>
    <scope>FUNCTION</scope>
    <source>
        <strain>IBT23078</strain>
    </source>
</reference>